<comment type="function">
    <text evidence="1">Essential for the assembly of the photosystem I (PSI) complex. May act as a chaperone-like factor to guide the assembly of the PSI subunits.</text>
</comment>
<comment type="subcellular location">
    <subcellularLocation>
        <location evidence="1">Plastid</location>
        <location evidence="1">Chloroplast thylakoid membrane</location>
        <topology evidence="1">Peripheral membrane protein</topology>
    </subcellularLocation>
</comment>
<comment type="RNA editing">
    <location>
        <position position="15" evidence="2"/>
    </location>
    <location>
        <position position="62" evidence="2"/>
    </location>
</comment>
<comment type="similarity">
    <text evidence="1">Belongs to the Ycf3 family.</text>
</comment>
<proteinExistence type="evidence at transcript level"/>
<organism>
    <name type="scientific">Saccharum hybrid</name>
    <name type="common">Sugarcane</name>
    <dbReference type="NCBI Taxonomy" id="15819"/>
    <lineage>
        <taxon>Eukaryota</taxon>
        <taxon>Viridiplantae</taxon>
        <taxon>Streptophyta</taxon>
        <taxon>Embryophyta</taxon>
        <taxon>Tracheophyta</taxon>
        <taxon>Spermatophyta</taxon>
        <taxon>Magnoliopsida</taxon>
        <taxon>Liliopsida</taxon>
        <taxon>Poales</taxon>
        <taxon>Poaceae</taxon>
        <taxon>PACMAD clade</taxon>
        <taxon>Panicoideae</taxon>
        <taxon>Andropogonodae</taxon>
        <taxon>Andropogoneae</taxon>
        <taxon>Saccharinae</taxon>
        <taxon>Saccharum</taxon>
    </lineage>
</organism>
<reference key="1">
    <citation type="journal article" date="2004" name="Curr. Genet.">
        <title>Structural features and transcript-editing analysis of sugarcane (Saccharum officinarum L.) chloroplast genome.</title>
        <authorList>
            <person name="Calsa T. Jr."/>
            <person name="Carraro D.M."/>
            <person name="Benatti M.R."/>
            <person name="Barbosa A.C."/>
            <person name="Kitajima J.P."/>
            <person name="Carrer H."/>
        </authorList>
    </citation>
    <scope>NUCLEOTIDE SEQUENCE [LARGE SCALE GENOMIC DNA]</scope>
    <scope>RNA EDITING</scope>
    <source>
        <strain>cv. SP-80-3280</strain>
    </source>
</reference>
<protein>
    <recommendedName>
        <fullName evidence="1">Photosystem I assembly protein Ycf3</fullName>
    </recommendedName>
</protein>
<feature type="chain" id="PRO_0000226947" description="Photosystem I assembly protein Ycf3">
    <location>
        <begin position="1"/>
        <end position="170"/>
    </location>
</feature>
<feature type="repeat" description="TPR 1">
    <location>
        <begin position="35"/>
        <end position="68"/>
    </location>
</feature>
<feature type="repeat" description="TPR 2">
    <location>
        <begin position="72"/>
        <end position="105"/>
    </location>
</feature>
<feature type="repeat" description="TPR 3">
    <location>
        <begin position="120"/>
        <end position="153"/>
    </location>
</feature>
<name>YCF3_SACHY</name>
<gene>
    <name evidence="1" type="primary">ycf3</name>
    <name type="ordered locus">PS117.1</name>
</gene>
<geneLocation type="chloroplast"/>
<evidence type="ECO:0000255" key="1">
    <source>
        <dbReference type="HAMAP-Rule" id="MF_00439"/>
    </source>
</evidence>
<evidence type="ECO:0000269" key="2">
    <source>
    </source>
</evidence>
<accession>P0C160</accession>
<dbReference type="EMBL" id="AE009947">
    <property type="status" value="NOT_ANNOTATED_CDS"/>
    <property type="molecule type" value="Genomic_DNA"/>
</dbReference>
<dbReference type="SMR" id="P0C160"/>
<dbReference type="GO" id="GO:0009535">
    <property type="term" value="C:chloroplast thylakoid membrane"/>
    <property type="evidence" value="ECO:0007669"/>
    <property type="project" value="UniProtKB-SubCell"/>
</dbReference>
<dbReference type="GO" id="GO:0015979">
    <property type="term" value="P:photosynthesis"/>
    <property type="evidence" value="ECO:0007669"/>
    <property type="project" value="UniProtKB-UniRule"/>
</dbReference>
<dbReference type="FunFam" id="1.25.40.10:FF:000004">
    <property type="entry name" value="Photosystem I assembly protein Ycf3"/>
    <property type="match status" value="1"/>
</dbReference>
<dbReference type="Gene3D" id="1.25.40.10">
    <property type="entry name" value="Tetratricopeptide repeat domain"/>
    <property type="match status" value="1"/>
</dbReference>
<dbReference type="HAMAP" id="MF_00439">
    <property type="entry name" value="Ycf3"/>
    <property type="match status" value="1"/>
</dbReference>
<dbReference type="InterPro" id="IPR022818">
    <property type="entry name" value="PSI_Ycf3_assembly"/>
</dbReference>
<dbReference type="InterPro" id="IPR011990">
    <property type="entry name" value="TPR-like_helical_dom_sf"/>
</dbReference>
<dbReference type="InterPro" id="IPR019734">
    <property type="entry name" value="TPR_rpt"/>
</dbReference>
<dbReference type="InterPro" id="IPR051685">
    <property type="entry name" value="Ycf3/AcsC/BcsC/TPR_MFPF"/>
</dbReference>
<dbReference type="NCBIfam" id="NF002725">
    <property type="entry name" value="PRK02603.1"/>
    <property type="match status" value="1"/>
</dbReference>
<dbReference type="PANTHER" id="PTHR44943">
    <property type="entry name" value="CELLULOSE SYNTHASE OPERON PROTEIN C"/>
    <property type="match status" value="1"/>
</dbReference>
<dbReference type="PANTHER" id="PTHR44943:SF8">
    <property type="entry name" value="TPR REPEAT-CONTAINING PROTEIN MJ0263"/>
    <property type="match status" value="1"/>
</dbReference>
<dbReference type="Pfam" id="PF00515">
    <property type="entry name" value="TPR_1"/>
    <property type="match status" value="1"/>
</dbReference>
<dbReference type="SMART" id="SM00028">
    <property type="entry name" value="TPR"/>
    <property type="match status" value="3"/>
</dbReference>
<dbReference type="SUPFAM" id="SSF48452">
    <property type="entry name" value="TPR-like"/>
    <property type="match status" value="1"/>
</dbReference>
<dbReference type="PROSITE" id="PS50005">
    <property type="entry name" value="TPR"/>
    <property type="match status" value="3"/>
</dbReference>
<dbReference type="PROSITE" id="PS50293">
    <property type="entry name" value="TPR_REGION"/>
    <property type="match status" value="1"/>
</dbReference>
<sequence>MPRSRINGNFIDKTFSIVANILLQIIPTTSGEKRAFTYYRDGMLAQSEGNYAEALQNYYEAMRLEIDPYDRSYILYNIGLIHTSNGEHTKALEYYFRALERNPFLPQAFNNMAVICHYRGEQAILQGDSEIAEAWFDQAAEYWKQAIALTPGNYIEAQNWLKITKRFEFE</sequence>
<keyword id="KW-0150">Chloroplast</keyword>
<keyword id="KW-0472">Membrane</keyword>
<keyword id="KW-0602">Photosynthesis</keyword>
<keyword id="KW-0934">Plastid</keyword>
<keyword id="KW-0677">Repeat</keyword>
<keyword id="KW-0691">RNA editing</keyword>
<keyword id="KW-0793">Thylakoid</keyword>
<keyword id="KW-0802">TPR repeat</keyword>